<evidence type="ECO:0000256" key="1">
    <source>
        <dbReference type="SAM" id="MobiDB-lite"/>
    </source>
</evidence>
<evidence type="ECO:0000305" key="2"/>
<evidence type="ECO:0000305" key="3">
    <source>
    </source>
</evidence>
<comment type="function">
    <text>Involved in the regulation of 1,3-beta-glucan synthase activity and cell-wall formation.</text>
</comment>
<comment type="similarity">
    <text evidence="2">Belongs to the KNR4/SMI1 family.</text>
</comment>
<comment type="caution">
    <text evidence="3">Was originally thought to be a glucan synthase.</text>
</comment>
<dbReference type="EMBL" id="U09275">
    <property type="protein sequence ID" value="AAA50440.1"/>
    <property type="molecule type" value="mRNA"/>
</dbReference>
<dbReference type="EMBL" id="AL451015">
    <property type="protein sequence ID" value="CAC18203.1"/>
    <property type="molecule type" value="Genomic_DNA"/>
</dbReference>
<dbReference type="EMBL" id="CM002240">
    <property type="protein sequence ID" value="EAA31913.3"/>
    <property type="molecule type" value="Genomic_DNA"/>
</dbReference>
<dbReference type="PIR" id="T46649">
    <property type="entry name" value="T46649"/>
</dbReference>
<dbReference type="RefSeq" id="XP_961149.3">
    <property type="nucleotide sequence ID" value="XM_956056.3"/>
</dbReference>
<dbReference type="SMR" id="P38678"/>
<dbReference type="FunCoup" id="P38678">
    <property type="interactions" value="58"/>
</dbReference>
<dbReference type="STRING" id="367110.P38678"/>
<dbReference type="PaxDb" id="5141-EFNCRP00000003789"/>
<dbReference type="EnsemblFungi" id="EAA31913">
    <property type="protein sequence ID" value="EAA31913"/>
    <property type="gene ID" value="NCU04189"/>
</dbReference>
<dbReference type="GeneID" id="3877315"/>
<dbReference type="KEGG" id="ncr:NCU04189"/>
<dbReference type="VEuPathDB" id="FungiDB:NCU04189"/>
<dbReference type="HOGENOM" id="CLU_024700_0_0_1"/>
<dbReference type="InParanoid" id="P38678"/>
<dbReference type="OrthoDB" id="2305498at2759"/>
<dbReference type="Proteomes" id="UP000001805">
    <property type="component" value="Chromosome 2, Linkage Group V"/>
</dbReference>
<dbReference type="GO" id="GO:0032153">
    <property type="term" value="C:cell division site"/>
    <property type="evidence" value="ECO:0007669"/>
    <property type="project" value="EnsemblFungi"/>
</dbReference>
<dbReference type="GO" id="GO:0097708">
    <property type="term" value="C:intracellular vesicle"/>
    <property type="evidence" value="ECO:0007669"/>
    <property type="project" value="EnsemblFungi"/>
</dbReference>
<dbReference type="GO" id="GO:0030674">
    <property type="term" value="F:protein-macromolecule adaptor activity"/>
    <property type="evidence" value="ECO:0007669"/>
    <property type="project" value="EnsemblFungi"/>
</dbReference>
<dbReference type="GO" id="GO:0071555">
    <property type="term" value="P:cell wall organization"/>
    <property type="evidence" value="ECO:0007669"/>
    <property type="project" value="UniProtKB-KW"/>
</dbReference>
<dbReference type="GO" id="GO:0070880">
    <property type="term" value="P:fungal-type cell wall beta-glucan biosynthetic process"/>
    <property type="evidence" value="ECO:0000318"/>
    <property type="project" value="GO_Central"/>
</dbReference>
<dbReference type="Gene3D" id="3.40.1580.10">
    <property type="entry name" value="SMI1/KNR4-like"/>
    <property type="match status" value="1"/>
</dbReference>
<dbReference type="InterPro" id="IPR009203">
    <property type="entry name" value="Knr4/Smi1"/>
</dbReference>
<dbReference type="InterPro" id="IPR018958">
    <property type="entry name" value="Knr4/Smi1-like_dom"/>
</dbReference>
<dbReference type="InterPro" id="IPR037883">
    <property type="entry name" value="Knr4/Smi1-like_sf"/>
</dbReference>
<dbReference type="InterPro" id="IPR051873">
    <property type="entry name" value="KNR4/SMI1_regulator"/>
</dbReference>
<dbReference type="PANTHER" id="PTHR47432">
    <property type="entry name" value="CELL WALL ASSEMBLY REGULATOR SMI1"/>
    <property type="match status" value="1"/>
</dbReference>
<dbReference type="PANTHER" id="PTHR47432:SF1">
    <property type="entry name" value="CELL WALL ASSEMBLY REGULATOR SMI1"/>
    <property type="match status" value="1"/>
</dbReference>
<dbReference type="Pfam" id="PF09346">
    <property type="entry name" value="SMI1_KNR4"/>
    <property type="match status" value="1"/>
</dbReference>
<dbReference type="PIRSF" id="PIRSF017023">
    <property type="entry name" value="KNR4"/>
    <property type="match status" value="1"/>
</dbReference>
<dbReference type="SMART" id="SM00860">
    <property type="entry name" value="SMI1_KNR4"/>
    <property type="match status" value="1"/>
</dbReference>
<dbReference type="SUPFAM" id="SSF160631">
    <property type="entry name" value="SMI1/KNR4-like"/>
    <property type="match status" value="1"/>
</dbReference>
<organism>
    <name type="scientific">Neurospora crassa (strain ATCC 24698 / 74-OR23-1A / CBS 708.71 / DSM 1257 / FGSC 987)</name>
    <dbReference type="NCBI Taxonomy" id="367110"/>
    <lineage>
        <taxon>Eukaryota</taxon>
        <taxon>Fungi</taxon>
        <taxon>Dikarya</taxon>
        <taxon>Ascomycota</taxon>
        <taxon>Pezizomycotina</taxon>
        <taxon>Sordariomycetes</taxon>
        <taxon>Sordariomycetidae</taxon>
        <taxon>Sordariales</taxon>
        <taxon>Sordariaceae</taxon>
        <taxon>Neurospora</taxon>
    </lineage>
</organism>
<keyword id="KW-0961">Cell wall biogenesis/degradation</keyword>
<keyword id="KW-1185">Reference proteome</keyword>
<keyword id="KW-0804">Transcription</keyword>
<keyword id="KW-0805">Transcription regulation</keyword>
<gene>
    <name type="primary">cot-2</name>
    <name type="synonym">gs-1</name>
    <name type="ORF">B13O20.130</name>
    <name type="ORF">NCU04189</name>
</gene>
<proteinExistence type="evidence at transcript level"/>
<accession>P38678</accession>
<accession>Q7RVC7</accession>
<name>GS1_NEUCR</name>
<protein>
    <recommendedName>
        <fullName>Glucan synthesis regulatory protein</fullName>
    </recommendedName>
    <alternativeName>
        <fullName>Colonial temperature-sensitive protein 2</fullName>
    </alternativeName>
</protein>
<feature type="chain" id="PRO_0000209871" description="Glucan synthesis regulatory protein">
    <location>
        <begin position="1"/>
        <end position="532"/>
    </location>
</feature>
<feature type="region of interest" description="Disordered" evidence="1">
    <location>
        <begin position="374"/>
        <end position="532"/>
    </location>
</feature>
<feature type="compositionally biased region" description="Low complexity" evidence="1">
    <location>
        <begin position="381"/>
        <end position="393"/>
    </location>
</feature>
<feature type="compositionally biased region" description="Polar residues" evidence="1">
    <location>
        <begin position="447"/>
        <end position="457"/>
    </location>
</feature>
<feature type="compositionally biased region" description="Basic and acidic residues" evidence="1">
    <location>
        <begin position="475"/>
        <end position="516"/>
    </location>
</feature>
<sequence>MAGLFKDIWHAMTSYDRHAGIDSPYRTGRHVPLNRNSGLAGVTTASDSRADINSPYLQGDGRGSTMSFDTAYGGRAISPMPSPANGGPYSPGLVSQRQSVHQDAFDVHSPTGEIPMQNFQNGGPPPPPVASSWEKIDRWAEENYPELFDQLGEGCTVNDLNELEYQLDCTLPQDLRQSLQIHDGQERGGLPTGIIFSSMLLDCEEMVQEWENWKTVNQEFMLDPVLVKRQSQAFAAQASSSKDAPNRNQNWRQELLNKQDSVPPAAIQKAYAHPAWIPLVRDWGGNNLAVDLAPGPKGHWGQIILFGRDYDTKYVVARSWAHFLAMVAEDLSSGRWFVDEDTNELKLREFKATRVEPSYFEILRWRMDQKYGRTANKRKSMAPSMASASGMRSPPTPGSPYQSPTEHNEPRGRSLHRLTGTSPMSSPIRPGYGKPSPLARVAEEAPPTTSLTASNASLEAKAADNLMELNTPRTSGEHSKEDIKVNEDSPAKERTSEDKEKKPETEANGKATESKGKQTTVEDAEDMKDIEI</sequence>
<reference key="1">
    <citation type="journal article" date="1994" name="Proc. Natl. Acad. Sci. U.S.A.">
        <title>Cloning and characterization of a Neurospora crassa gene required for (1,3) beta-glucan synthase activity and cell wall formation.</title>
        <authorList>
            <person name="Enderlin C.S."/>
            <person name="Selitrennikoff C.P."/>
        </authorList>
    </citation>
    <scope>NUCLEOTIDE SEQUENCE [MRNA]</scope>
    <scope>PRELIMINARY FUNCTION</scope>
    <source>
        <strain>ATCC 24698 / 74-OR23-1A / CBS 708.71 / DSM 1257 / FGSC 987</strain>
    </source>
</reference>
<reference key="2">
    <citation type="journal article" date="2003" name="Nucleic Acids Res.">
        <title>What's in the genome of a filamentous fungus? Analysis of the Neurospora genome sequence.</title>
        <authorList>
            <person name="Mannhaupt G."/>
            <person name="Montrone C."/>
            <person name="Haase D."/>
            <person name="Mewes H.-W."/>
            <person name="Aign V."/>
            <person name="Hoheisel J.D."/>
            <person name="Fartmann B."/>
            <person name="Nyakatura G."/>
            <person name="Kempken F."/>
            <person name="Maier J."/>
            <person name="Schulte U."/>
        </authorList>
    </citation>
    <scope>NUCLEOTIDE SEQUENCE [LARGE SCALE GENOMIC DNA]</scope>
    <source>
        <strain>ATCC 24698 / 74-OR23-1A / CBS 708.71 / DSM 1257 / FGSC 987</strain>
    </source>
</reference>
<reference key="3">
    <citation type="journal article" date="2003" name="Nature">
        <title>The genome sequence of the filamentous fungus Neurospora crassa.</title>
        <authorList>
            <person name="Galagan J.E."/>
            <person name="Calvo S.E."/>
            <person name="Borkovich K.A."/>
            <person name="Selker E.U."/>
            <person name="Read N.D."/>
            <person name="Jaffe D.B."/>
            <person name="FitzHugh W."/>
            <person name="Ma L.-J."/>
            <person name="Smirnov S."/>
            <person name="Purcell S."/>
            <person name="Rehman B."/>
            <person name="Elkins T."/>
            <person name="Engels R."/>
            <person name="Wang S."/>
            <person name="Nielsen C.B."/>
            <person name="Butler J."/>
            <person name="Endrizzi M."/>
            <person name="Qui D."/>
            <person name="Ianakiev P."/>
            <person name="Bell-Pedersen D."/>
            <person name="Nelson M.A."/>
            <person name="Werner-Washburne M."/>
            <person name="Selitrennikoff C.P."/>
            <person name="Kinsey J.A."/>
            <person name="Braun E.L."/>
            <person name="Zelter A."/>
            <person name="Schulte U."/>
            <person name="Kothe G.O."/>
            <person name="Jedd G."/>
            <person name="Mewes H.-W."/>
            <person name="Staben C."/>
            <person name="Marcotte E."/>
            <person name="Greenberg D."/>
            <person name="Roy A."/>
            <person name="Foley K."/>
            <person name="Naylor J."/>
            <person name="Stange-Thomann N."/>
            <person name="Barrett R."/>
            <person name="Gnerre S."/>
            <person name="Kamal M."/>
            <person name="Kamvysselis M."/>
            <person name="Mauceli E.W."/>
            <person name="Bielke C."/>
            <person name="Rudd S."/>
            <person name="Frishman D."/>
            <person name="Krystofova S."/>
            <person name="Rasmussen C."/>
            <person name="Metzenberg R.L."/>
            <person name="Perkins D.D."/>
            <person name="Kroken S."/>
            <person name="Cogoni C."/>
            <person name="Macino G."/>
            <person name="Catcheside D.E.A."/>
            <person name="Li W."/>
            <person name="Pratt R.J."/>
            <person name="Osmani S.A."/>
            <person name="DeSouza C.P.C."/>
            <person name="Glass N.L."/>
            <person name="Orbach M.J."/>
            <person name="Berglund J.A."/>
            <person name="Voelker R."/>
            <person name="Yarden O."/>
            <person name="Plamann M."/>
            <person name="Seiler S."/>
            <person name="Dunlap J.C."/>
            <person name="Radford A."/>
            <person name="Aramayo R."/>
            <person name="Natvig D.O."/>
            <person name="Alex L.A."/>
            <person name="Mannhaupt G."/>
            <person name="Ebbole D.J."/>
            <person name="Freitag M."/>
            <person name="Paulsen I."/>
            <person name="Sachs M.S."/>
            <person name="Lander E.S."/>
            <person name="Nusbaum C."/>
            <person name="Birren B.W."/>
        </authorList>
    </citation>
    <scope>NUCLEOTIDE SEQUENCE [LARGE SCALE GENOMIC DNA]</scope>
    <source>
        <strain>ATCC 24698 / 74-OR23-1A / CBS 708.71 / DSM 1257 / FGSC 987</strain>
    </source>
</reference>